<accession>O13444</accession>
<proteinExistence type="evidence at transcript level"/>
<evidence type="ECO:0000250" key="1"/>
<evidence type="ECO:0000250" key="2">
    <source>
        <dbReference type="UniProtKB" id="P25641"/>
    </source>
</evidence>
<evidence type="ECO:0000255" key="3"/>
<evidence type="ECO:0000255" key="4">
    <source>
        <dbReference type="PROSITE-ProRule" id="PRU10037"/>
    </source>
</evidence>
<evidence type="ECO:0000256" key="5">
    <source>
        <dbReference type="SAM" id="MobiDB-lite"/>
    </source>
</evidence>
<evidence type="ECO:0000269" key="6">
    <source>
    </source>
</evidence>
<evidence type="ECO:0000305" key="7"/>
<protein>
    <recommendedName>
        <fullName>Putative lipase ATG15</fullName>
        <ecNumber>3.1.1.3</ecNumber>
    </recommendedName>
    <alternativeName>
        <fullName>Autophagy-related protein 15</fullName>
    </alternativeName>
</protein>
<organism>
    <name type="scientific">Passalora fulva</name>
    <name type="common">Tomato leaf mold</name>
    <name type="synonym">Cladosporium fulvum</name>
    <dbReference type="NCBI Taxonomy" id="5499"/>
    <lineage>
        <taxon>Eukaryota</taxon>
        <taxon>Fungi</taxon>
        <taxon>Dikarya</taxon>
        <taxon>Ascomycota</taxon>
        <taxon>Pezizomycotina</taxon>
        <taxon>Dothideomycetes</taxon>
        <taxon>Dothideomycetidae</taxon>
        <taxon>Mycosphaerellales</taxon>
        <taxon>Mycosphaerellaceae</taxon>
        <taxon>Fulvia</taxon>
    </lineage>
</organism>
<keyword id="KW-0072">Autophagy</keyword>
<keyword id="KW-0967">Endosome</keyword>
<keyword id="KW-0325">Glycoprotein</keyword>
<keyword id="KW-0378">Hydrolase</keyword>
<keyword id="KW-0442">Lipid degradation</keyword>
<keyword id="KW-0443">Lipid metabolism</keyword>
<keyword id="KW-0472">Membrane</keyword>
<keyword id="KW-0735">Signal-anchor</keyword>
<keyword id="KW-0812">Transmembrane</keyword>
<keyword id="KW-1133">Transmembrane helix</keyword>
<name>ATG15_PASFU</name>
<reference key="1">
    <citation type="journal article" date="1997" name="Mol. Plant Microbe Interact.">
        <title>Starvation-induced genes of the tomato pathogen Cladosporium fulvum are also induced during growth in planta.</title>
        <authorList>
            <person name="Coleman M."/>
            <person name="Henricot B."/>
            <person name="Arnau J."/>
            <person name="Oliver R.P."/>
        </authorList>
    </citation>
    <scope>NUCLEOTIDE SEQUENCE [MRNA]</scope>
    <scope>INDUCTION</scope>
    <source>
        <strain>Race 4</strain>
    </source>
</reference>
<comment type="function">
    <text evidence="1">Lipase which is essential for lysis of subvacuolar cytoplasm to vacuole targeted bodies and intravacuolar autophagic bodies. Involved in the lysis of intravacuolar multivesicular body (MVB) vesicles. The intravacuolar membrane disintegration by ATG15 is critical to life span extension (By similarity).</text>
</comment>
<comment type="catalytic activity">
    <reaction>
        <text>a triacylglycerol + H2O = a diacylglycerol + a fatty acid + H(+)</text>
        <dbReference type="Rhea" id="RHEA:12044"/>
        <dbReference type="ChEBI" id="CHEBI:15377"/>
        <dbReference type="ChEBI" id="CHEBI:15378"/>
        <dbReference type="ChEBI" id="CHEBI:17855"/>
        <dbReference type="ChEBI" id="CHEBI:18035"/>
        <dbReference type="ChEBI" id="CHEBI:28868"/>
        <dbReference type="EC" id="3.1.1.3"/>
    </reaction>
</comment>
<comment type="subunit">
    <text evidence="1">Binds to both phosphatidylinositol (PI) and phosphatidylinositol 3,5-bisphosphate (PIP2).</text>
</comment>
<comment type="subcellular location">
    <subcellularLocation>
        <location evidence="2">Endosome</location>
        <location evidence="2">Multivesicular body membrane</location>
        <topology evidence="2">Single-pass type II membrane protein</topology>
    </subcellularLocation>
    <subcellularLocation>
        <location evidence="2">Prevacuolar compartment membrane</location>
        <topology evidence="2">Single-pass type II membrane protein</topology>
    </subcellularLocation>
    <text evidence="2">From ER, targeted to vacuolar lumen at the MVB vesicles via the Golgi and the prevacuolar compartment (PVC).</text>
</comment>
<comment type="induction">
    <text evidence="6">During starvation and plant infection.</text>
</comment>
<comment type="similarity">
    <text evidence="7">Belongs to the AB hydrolase superfamily. Lipase family.</text>
</comment>
<feature type="chain" id="PRO_0000317961" description="Putative lipase ATG15">
    <location>
        <begin position="1"/>
        <end position="661"/>
    </location>
</feature>
<feature type="topological domain" description="Cytoplasmic" evidence="1">
    <location>
        <begin position="1"/>
        <end position="3"/>
    </location>
</feature>
<feature type="transmembrane region" description="Helical; Signal-anchor for type II membrane protein">
    <location>
        <begin position="4"/>
        <end position="24"/>
    </location>
</feature>
<feature type="topological domain" description="Lumenal" evidence="1">
    <location>
        <begin position="25"/>
        <end position="661"/>
    </location>
</feature>
<feature type="region of interest" description="Disordered" evidence="5">
    <location>
        <begin position="492"/>
        <end position="559"/>
    </location>
</feature>
<feature type="region of interest" description="Disordered" evidence="5">
    <location>
        <begin position="574"/>
        <end position="597"/>
    </location>
</feature>
<feature type="compositionally biased region" description="Low complexity" evidence="5">
    <location>
        <begin position="493"/>
        <end position="513"/>
    </location>
</feature>
<feature type="compositionally biased region" description="Low complexity" evidence="5">
    <location>
        <begin position="527"/>
        <end position="559"/>
    </location>
</feature>
<feature type="compositionally biased region" description="Low complexity" evidence="5">
    <location>
        <begin position="574"/>
        <end position="595"/>
    </location>
</feature>
<feature type="active site" description="Charge relay system" evidence="4">
    <location>
        <position position="311"/>
    </location>
</feature>
<feature type="glycosylation site" description="N-linked (GlcNAc...) asparagine" evidence="3">
    <location>
        <position position="155"/>
    </location>
</feature>
<feature type="glycosylation site" description="N-linked (GlcNAc...) asparagine" evidence="3">
    <location>
        <position position="190"/>
    </location>
</feature>
<feature type="glycosylation site" description="N-linked (GlcNAc...) asparagine" evidence="3">
    <location>
        <position position="212"/>
    </location>
</feature>
<feature type="glycosylation site" description="N-linked (GlcNAc...) asparagine" evidence="3">
    <location>
        <position position="271"/>
    </location>
</feature>
<feature type="glycosylation site" description="N-linked (GlcNAc...) asparagine" evidence="3">
    <location>
        <position position="295"/>
    </location>
</feature>
<feature type="glycosylation site" description="N-linked (GlcNAc...) asparagine" evidence="3">
    <location>
        <position position="457"/>
    </location>
</feature>
<dbReference type="EC" id="3.1.1.3"/>
<dbReference type="EMBL" id="Y14554">
    <property type="protein sequence ID" value="CAA74888.1"/>
    <property type="molecule type" value="mRNA"/>
</dbReference>
<dbReference type="ESTHER" id="clafu-PSI7">
    <property type="family name" value="ATG15-related-lipase"/>
</dbReference>
<dbReference type="GlyCosmos" id="O13444">
    <property type="glycosylation" value="6 sites, No reported glycans"/>
</dbReference>
<dbReference type="OMA" id="TYHFGHT"/>
<dbReference type="GO" id="GO:0032585">
    <property type="term" value="C:multivesicular body membrane"/>
    <property type="evidence" value="ECO:0007669"/>
    <property type="project" value="UniProtKB-SubCell"/>
</dbReference>
<dbReference type="GO" id="GO:0005775">
    <property type="term" value="C:vacuolar lumen"/>
    <property type="evidence" value="ECO:0007669"/>
    <property type="project" value="TreeGrafter"/>
</dbReference>
<dbReference type="GO" id="GO:0004620">
    <property type="term" value="F:phospholipase activity"/>
    <property type="evidence" value="ECO:0007669"/>
    <property type="project" value="TreeGrafter"/>
</dbReference>
<dbReference type="GO" id="GO:0004806">
    <property type="term" value="F:triacylglycerol lipase activity"/>
    <property type="evidence" value="ECO:0007669"/>
    <property type="project" value="UniProtKB-EC"/>
</dbReference>
<dbReference type="GO" id="GO:0034496">
    <property type="term" value="P:multivesicular body membrane disassembly"/>
    <property type="evidence" value="ECO:0007669"/>
    <property type="project" value="TreeGrafter"/>
</dbReference>
<dbReference type="GO" id="GO:0046461">
    <property type="term" value="P:neutral lipid catabolic process"/>
    <property type="evidence" value="ECO:0007669"/>
    <property type="project" value="TreeGrafter"/>
</dbReference>
<dbReference type="GO" id="GO:0006660">
    <property type="term" value="P:phosphatidylserine catabolic process"/>
    <property type="evidence" value="ECO:0007669"/>
    <property type="project" value="TreeGrafter"/>
</dbReference>
<dbReference type="GO" id="GO:0034727">
    <property type="term" value="P:piecemeal microautophagy of the nucleus"/>
    <property type="evidence" value="ECO:0007669"/>
    <property type="project" value="TreeGrafter"/>
</dbReference>
<dbReference type="FunFam" id="3.40.50.1820:FF:000129">
    <property type="entry name" value="Autophagy related lipase Atg15, putative"/>
    <property type="match status" value="1"/>
</dbReference>
<dbReference type="Gene3D" id="3.40.50.1820">
    <property type="entry name" value="alpha/beta hydrolase"/>
    <property type="match status" value="1"/>
</dbReference>
<dbReference type="InterPro" id="IPR029058">
    <property type="entry name" value="AB_hydrolase_fold"/>
</dbReference>
<dbReference type="InterPro" id="IPR050805">
    <property type="entry name" value="ATG15_Lipase"/>
</dbReference>
<dbReference type="InterPro" id="IPR002921">
    <property type="entry name" value="Fungal_lipase-type"/>
</dbReference>
<dbReference type="PANTHER" id="PTHR47175">
    <property type="entry name" value="LIPASE ATG15-RELATED"/>
    <property type="match status" value="1"/>
</dbReference>
<dbReference type="PANTHER" id="PTHR47175:SF2">
    <property type="entry name" value="LIPASE ATG15-RELATED"/>
    <property type="match status" value="1"/>
</dbReference>
<dbReference type="Pfam" id="PF01764">
    <property type="entry name" value="Lipase_3"/>
    <property type="match status" value="1"/>
</dbReference>
<dbReference type="SUPFAM" id="SSF53474">
    <property type="entry name" value="alpha/beta-Hydrolases"/>
    <property type="match status" value="1"/>
</dbReference>
<dbReference type="PROSITE" id="PS00120">
    <property type="entry name" value="LIPASE_SER"/>
    <property type="match status" value="1"/>
</dbReference>
<sequence length="661" mass="71955">MIWNGRLVLACVLLIAGCSGQVDAARTREQRKAFGSPNIVLPPGPAHEVASAKPARALGEKTFTLRHVYHHGTHNYPNLHRYIDIQPESKLQVSYDDGTTYEEAEVAFKAKAQSRIVQRMAHRSHSDIDAVQVHYFTYGQPADVEWTEDEIAGPNISDKSTVLTFAKMAANAYIFSRKDGEWQPVKGGFNYTDDFGWEQDGLRGHIFADEANSTVVIGLKGTSPAIFDGADTTGNDKLNDNLFGSCCCAQGGPFTWKKVCDCAGSSAYTCNNTCLVKSLREKGHYYWAVKDLYRNVTERYPDSEVWLSGHSLGGVVSSLLGLTYGLPTLTFEAFPDAMAASRLGLPTPPGYKIGSHQARPMTGIHHFGHTADPIYMGSCNGGTSFCSIGGYAFEGVCHTGETCTYDTVRDLGWRVGIGTHKIVSVIKDVIKVYDQPPSCEQDVECVDCYNWKYFENNGTETTTSKASTATSTTTRTRTETCKTPGWWGCLDESTTSAPTTSTSTSSSTSSTRTCETPGWFGCKDETTTTSSSSSISSPSATPAPTITTTSSLPTSTSTSTCKTPGWFGCYDESTTTSATPKPSSTARTVTKTKTTTSDDDDCTSREWFGLICVDPSPTTASGSSPSSTNLPTTRRKMCTKRHWYGTCKQWRFDDFDPKNDL</sequence>
<gene>
    <name type="primary">ATG15</name>
    <name type="synonym">pSI-7</name>
</gene>